<evidence type="ECO:0000255" key="1">
    <source>
        <dbReference type="HAMAP-Rule" id="MF_01516"/>
    </source>
</evidence>
<keyword id="KW-0520">NAD</keyword>
<keyword id="KW-0560">Oxidoreductase</keyword>
<keyword id="KW-0816">Tricarboxylic acid cycle</keyword>
<reference key="1">
    <citation type="journal article" date="2008" name="PLoS ONE">
        <title>Genome biology of Actinobacillus pleuropneumoniae JL03, an isolate of serotype 3 prevalent in China.</title>
        <authorList>
            <person name="Xu Z."/>
            <person name="Zhou Y."/>
            <person name="Li L."/>
            <person name="Zhou R."/>
            <person name="Xiao S."/>
            <person name="Wan Y."/>
            <person name="Zhang S."/>
            <person name="Wang K."/>
            <person name="Li W."/>
            <person name="Li L."/>
            <person name="Jin H."/>
            <person name="Kang M."/>
            <person name="Dalai B."/>
            <person name="Li T."/>
            <person name="Liu L."/>
            <person name="Cheng Y."/>
            <person name="Zhang L."/>
            <person name="Xu T."/>
            <person name="Zheng H."/>
            <person name="Pu S."/>
            <person name="Wang B."/>
            <person name="Gu W."/>
            <person name="Zhang X.L."/>
            <person name="Zhu G.-F."/>
            <person name="Wang S."/>
            <person name="Zhao G.-P."/>
            <person name="Chen H."/>
        </authorList>
    </citation>
    <scope>NUCLEOTIDE SEQUENCE [LARGE SCALE GENOMIC DNA]</scope>
    <source>
        <strain>JL03</strain>
    </source>
</reference>
<organism>
    <name type="scientific">Actinobacillus pleuropneumoniae serotype 3 (strain JL03)</name>
    <dbReference type="NCBI Taxonomy" id="434271"/>
    <lineage>
        <taxon>Bacteria</taxon>
        <taxon>Pseudomonadati</taxon>
        <taxon>Pseudomonadota</taxon>
        <taxon>Gammaproteobacteria</taxon>
        <taxon>Pasteurellales</taxon>
        <taxon>Pasteurellaceae</taxon>
        <taxon>Actinobacillus</taxon>
    </lineage>
</organism>
<comment type="function">
    <text evidence="1">Catalyzes the reversible oxidation of malate to oxaloacetate.</text>
</comment>
<comment type="catalytic activity">
    <reaction evidence="1">
        <text>(S)-malate + NAD(+) = oxaloacetate + NADH + H(+)</text>
        <dbReference type="Rhea" id="RHEA:21432"/>
        <dbReference type="ChEBI" id="CHEBI:15378"/>
        <dbReference type="ChEBI" id="CHEBI:15589"/>
        <dbReference type="ChEBI" id="CHEBI:16452"/>
        <dbReference type="ChEBI" id="CHEBI:57540"/>
        <dbReference type="ChEBI" id="CHEBI:57945"/>
        <dbReference type="EC" id="1.1.1.37"/>
    </reaction>
</comment>
<comment type="subunit">
    <text evidence="1">Homodimer.</text>
</comment>
<comment type="similarity">
    <text evidence="1">Belongs to the LDH/MDH superfamily. MDH type 1 family.</text>
</comment>
<name>MDH_ACTPJ</name>
<sequence length="317" mass="33405">MKVALLGAAGGIGQTLALLLKLRLPVGTDLALYDISPVTPGIAVDISHIPTSVSAVGYSGEDPSEALKGANLVIITAGVARKPGMTRADLFNINADIVKNLVEKVAEVCPKACIGIVTNPVNTLVPIAAEVLRKAGVYDKRKLFGVTTLDVVRAKTFTSELKEKHVETVKVPVIGGHSGPTILPLLSQALSEGLPLSFTQEEIEALTYRIQNAGTEVVEAKAGGGSATLSMAESGARFAVAVFKALLGEDCVRYAYVESKEGSGYPEFFAHPVRFGLTGVEELLPIGKLSEYEQAKLDELKPVLEADIALGKNFVNP</sequence>
<feature type="chain" id="PRO_1000146166" description="Malate dehydrogenase">
    <location>
        <begin position="1"/>
        <end position="317"/>
    </location>
</feature>
<feature type="active site" description="Proton acceptor" evidence="1">
    <location>
        <position position="177"/>
    </location>
</feature>
<feature type="binding site" evidence="1">
    <location>
        <begin position="7"/>
        <end position="13"/>
    </location>
    <ligand>
        <name>NAD(+)</name>
        <dbReference type="ChEBI" id="CHEBI:57540"/>
    </ligand>
</feature>
<feature type="binding site" evidence="1">
    <location>
        <position position="34"/>
    </location>
    <ligand>
        <name>NAD(+)</name>
        <dbReference type="ChEBI" id="CHEBI:57540"/>
    </ligand>
</feature>
<feature type="binding site" evidence="1">
    <location>
        <position position="81"/>
    </location>
    <ligand>
        <name>substrate</name>
    </ligand>
</feature>
<feature type="binding site" evidence="1">
    <location>
        <position position="87"/>
    </location>
    <ligand>
        <name>substrate</name>
    </ligand>
</feature>
<feature type="binding site" evidence="1">
    <location>
        <position position="94"/>
    </location>
    <ligand>
        <name>NAD(+)</name>
        <dbReference type="ChEBI" id="CHEBI:57540"/>
    </ligand>
</feature>
<feature type="binding site" evidence="1">
    <location>
        <begin position="117"/>
        <end position="119"/>
    </location>
    <ligand>
        <name>NAD(+)</name>
        <dbReference type="ChEBI" id="CHEBI:57540"/>
    </ligand>
</feature>
<feature type="binding site" evidence="1">
    <location>
        <position position="119"/>
    </location>
    <ligand>
        <name>substrate</name>
    </ligand>
</feature>
<feature type="binding site" evidence="1">
    <location>
        <position position="153"/>
    </location>
    <ligand>
        <name>substrate</name>
    </ligand>
</feature>
<feature type="binding site" evidence="1">
    <location>
        <position position="231"/>
    </location>
    <ligand>
        <name>NAD(+)</name>
        <dbReference type="ChEBI" id="CHEBI:57540"/>
    </ligand>
</feature>
<gene>
    <name evidence="1" type="primary">mdh</name>
    <name type="ordered locus">APJL_1309</name>
</gene>
<protein>
    <recommendedName>
        <fullName evidence="1">Malate dehydrogenase</fullName>
        <ecNumber evidence="1">1.1.1.37</ecNumber>
    </recommendedName>
</protein>
<proteinExistence type="inferred from homology"/>
<dbReference type="EC" id="1.1.1.37" evidence="1"/>
<dbReference type="EMBL" id="CP000687">
    <property type="protein sequence ID" value="ABY69865.1"/>
    <property type="molecule type" value="Genomic_DNA"/>
</dbReference>
<dbReference type="RefSeq" id="WP_005598352.1">
    <property type="nucleotide sequence ID" value="NC_010278.1"/>
</dbReference>
<dbReference type="SMR" id="B0BQN0"/>
<dbReference type="GeneID" id="48599541"/>
<dbReference type="KEGG" id="apj:APJL_1309"/>
<dbReference type="HOGENOM" id="CLU_047181_1_0_6"/>
<dbReference type="Proteomes" id="UP000008547">
    <property type="component" value="Chromosome"/>
</dbReference>
<dbReference type="GO" id="GO:0005737">
    <property type="term" value="C:cytoplasm"/>
    <property type="evidence" value="ECO:0007669"/>
    <property type="project" value="TreeGrafter"/>
</dbReference>
<dbReference type="GO" id="GO:0030060">
    <property type="term" value="F:L-malate dehydrogenase (NAD+) activity"/>
    <property type="evidence" value="ECO:0007669"/>
    <property type="project" value="UniProtKB-UniRule"/>
</dbReference>
<dbReference type="GO" id="GO:0019752">
    <property type="term" value="P:carboxylic acid metabolic process"/>
    <property type="evidence" value="ECO:0007669"/>
    <property type="project" value="InterPro"/>
</dbReference>
<dbReference type="GO" id="GO:0006099">
    <property type="term" value="P:tricarboxylic acid cycle"/>
    <property type="evidence" value="ECO:0007669"/>
    <property type="project" value="UniProtKB-UniRule"/>
</dbReference>
<dbReference type="CDD" id="cd01337">
    <property type="entry name" value="MDH_glyoxysomal_mitochondrial"/>
    <property type="match status" value="1"/>
</dbReference>
<dbReference type="FunFam" id="3.40.50.720:FF:000017">
    <property type="entry name" value="Malate dehydrogenase"/>
    <property type="match status" value="1"/>
</dbReference>
<dbReference type="FunFam" id="3.90.110.10:FF:000001">
    <property type="entry name" value="Malate dehydrogenase"/>
    <property type="match status" value="1"/>
</dbReference>
<dbReference type="Gene3D" id="3.90.110.10">
    <property type="entry name" value="Lactate dehydrogenase/glycoside hydrolase, family 4, C-terminal"/>
    <property type="match status" value="1"/>
</dbReference>
<dbReference type="Gene3D" id="3.40.50.720">
    <property type="entry name" value="NAD(P)-binding Rossmann-like Domain"/>
    <property type="match status" value="1"/>
</dbReference>
<dbReference type="HAMAP" id="MF_01516">
    <property type="entry name" value="Malate_dehydrog_1"/>
    <property type="match status" value="1"/>
</dbReference>
<dbReference type="InterPro" id="IPR001557">
    <property type="entry name" value="L-lactate/malate_DH"/>
</dbReference>
<dbReference type="InterPro" id="IPR022383">
    <property type="entry name" value="Lactate/malate_DH_C"/>
</dbReference>
<dbReference type="InterPro" id="IPR001236">
    <property type="entry name" value="Lactate/malate_DH_N"/>
</dbReference>
<dbReference type="InterPro" id="IPR015955">
    <property type="entry name" value="Lactate_DH/Glyco_Ohase_4_C"/>
</dbReference>
<dbReference type="InterPro" id="IPR010097">
    <property type="entry name" value="Malate_DH_type1"/>
</dbReference>
<dbReference type="InterPro" id="IPR023958">
    <property type="entry name" value="Malate_DH_type1_bac"/>
</dbReference>
<dbReference type="InterPro" id="IPR036291">
    <property type="entry name" value="NAD(P)-bd_dom_sf"/>
</dbReference>
<dbReference type="NCBIfam" id="TIGR01772">
    <property type="entry name" value="MDH_euk_gproteo"/>
    <property type="match status" value="1"/>
</dbReference>
<dbReference type="PANTHER" id="PTHR11540">
    <property type="entry name" value="MALATE AND LACTATE DEHYDROGENASE"/>
    <property type="match status" value="1"/>
</dbReference>
<dbReference type="PANTHER" id="PTHR11540:SF16">
    <property type="entry name" value="MALATE DEHYDROGENASE, MITOCHONDRIAL"/>
    <property type="match status" value="1"/>
</dbReference>
<dbReference type="Pfam" id="PF02866">
    <property type="entry name" value="Ldh_1_C"/>
    <property type="match status" value="1"/>
</dbReference>
<dbReference type="Pfam" id="PF00056">
    <property type="entry name" value="Ldh_1_N"/>
    <property type="match status" value="1"/>
</dbReference>
<dbReference type="PIRSF" id="PIRSF000102">
    <property type="entry name" value="Lac_mal_DH"/>
    <property type="match status" value="1"/>
</dbReference>
<dbReference type="SUPFAM" id="SSF56327">
    <property type="entry name" value="LDH C-terminal domain-like"/>
    <property type="match status" value="1"/>
</dbReference>
<dbReference type="SUPFAM" id="SSF51735">
    <property type="entry name" value="NAD(P)-binding Rossmann-fold domains"/>
    <property type="match status" value="1"/>
</dbReference>
<accession>B0BQN0</accession>